<dbReference type="EMBL" id="CP000247">
    <property type="protein sequence ID" value="ABG71541.1"/>
    <property type="molecule type" value="Genomic_DNA"/>
</dbReference>
<dbReference type="RefSeq" id="WP_000130621.1">
    <property type="nucleotide sequence ID" value="NC_008253.1"/>
</dbReference>
<dbReference type="SMR" id="Q0TBY8"/>
<dbReference type="GeneID" id="93778521"/>
<dbReference type="KEGG" id="ecp:ECP_3565"/>
<dbReference type="HOGENOM" id="CLU_165255_5_0_6"/>
<dbReference type="Proteomes" id="UP000009182">
    <property type="component" value="Chromosome"/>
</dbReference>
<dbReference type="GO" id="GO:0005737">
    <property type="term" value="C:cytoplasm"/>
    <property type="evidence" value="ECO:0007669"/>
    <property type="project" value="UniProtKB-SubCell"/>
</dbReference>
<dbReference type="GO" id="GO:0097163">
    <property type="term" value="F:sulfur carrier activity"/>
    <property type="evidence" value="ECO:0007669"/>
    <property type="project" value="UniProtKB-UniRule"/>
</dbReference>
<dbReference type="GO" id="GO:0002143">
    <property type="term" value="P:tRNA wobble position uridine thiolation"/>
    <property type="evidence" value="ECO:0007669"/>
    <property type="project" value="InterPro"/>
</dbReference>
<dbReference type="CDD" id="cd03423">
    <property type="entry name" value="SirA"/>
    <property type="match status" value="1"/>
</dbReference>
<dbReference type="FunFam" id="3.30.110.40:FF:000002">
    <property type="entry name" value="Sulfur carrier protein TusA"/>
    <property type="match status" value="1"/>
</dbReference>
<dbReference type="Gene3D" id="3.30.110.40">
    <property type="entry name" value="TusA-like domain"/>
    <property type="match status" value="1"/>
</dbReference>
<dbReference type="HAMAP" id="MF_00413">
    <property type="entry name" value="Thiourid_synth_A"/>
    <property type="match status" value="1"/>
</dbReference>
<dbReference type="InterPro" id="IPR022931">
    <property type="entry name" value="Sulphur_carrier_TusA"/>
</dbReference>
<dbReference type="InterPro" id="IPR001455">
    <property type="entry name" value="TusA-like"/>
</dbReference>
<dbReference type="InterPro" id="IPR036868">
    <property type="entry name" value="TusA-like_sf"/>
</dbReference>
<dbReference type="NCBIfam" id="NF001423">
    <property type="entry name" value="PRK00299.1"/>
    <property type="match status" value="1"/>
</dbReference>
<dbReference type="PANTHER" id="PTHR33279:SF2">
    <property type="entry name" value="SULFUR CARRIER PROTEIN TUSA"/>
    <property type="match status" value="1"/>
</dbReference>
<dbReference type="PANTHER" id="PTHR33279">
    <property type="entry name" value="SULFUR CARRIER PROTEIN YEDF-RELATED"/>
    <property type="match status" value="1"/>
</dbReference>
<dbReference type="Pfam" id="PF01206">
    <property type="entry name" value="TusA"/>
    <property type="match status" value="1"/>
</dbReference>
<dbReference type="SUPFAM" id="SSF64307">
    <property type="entry name" value="SirA-like"/>
    <property type="match status" value="1"/>
</dbReference>
<dbReference type="PROSITE" id="PS01148">
    <property type="entry name" value="UPF0033"/>
    <property type="match status" value="1"/>
</dbReference>
<name>TUSA_ECOL5</name>
<keyword id="KW-0963">Cytoplasm</keyword>
<keyword id="KW-0819">tRNA processing</keyword>
<organism>
    <name type="scientific">Escherichia coli O6:K15:H31 (strain 536 / UPEC)</name>
    <dbReference type="NCBI Taxonomy" id="362663"/>
    <lineage>
        <taxon>Bacteria</taxon>
        <taxon>Pseudomonadati</taxon>
        <taxon>Pseudomonadota</taxon>
        <taxon>Gammaproteobacteria</taxon>
        <taxon>Enterobacterales</taxon>
        <taxon>Enterobacteriaceae</taxon>
        <taxon>Escherichia</taxon>
    </lineage>
</organism>
<feature type="chain" id="PRO_1000050011" description="Sulfur carrier protein TusA">
    <location>
        <begin position="1"/>
        <end position="81"/>
    </location>
</feature>
<feature type="active site" description="Cysteine persulfide intermediate" evidence="1">
    <location>
        <position position="19"/>
    </location>
</feature>
<proteinExistence type="inferred from homology"/>
<reference key="1">
    <citation type="journal article" date="2006" name="Mol. Microbiol.">
        <title>Role of pathogenicity island-associated integrases in the genome plasticity of uropathogenic Escherichia coli strain 536.</title>
        <authorList>
            <person name="Hochhut B."/>
            <person name="Wilde C."/>
            <person name="Balling G."/>
            <person name="Middendorf B."/>
            <person name="Dobrindt U."/>
            <person name="Brzuszkiewicz E."/>
            <person name="Gottschalk G."/>
            <person name="Carniel E."/>
            <person name="Hacker J."/>
        </authorList>
    </citation>
    <scope>NUCLEOTIDE SEQUENCE [LARGE SCALE GENOMIC DNA]</scope>
    <source>
        <strain>536 / UPEC</strain>
    </source>
</reference>
<evidence type="ECO:0000255" key="1">
    <source>
        <dbReference type="HAMAP-Rule" id="MF_00413"/>
    </source>
</evidence>
<comment type="function">
    <text evidence="1">Sulfur carrier protein involved in sulfur trafficking in the cell. Part of a sulfur-relay system required for 2-thiolation during synthesis of 2-thiouridine of the modified wobble base 5-methylaminomethyl-2-thiouridine (mnm(5)s(2)U) in tRNA. Interacts with IscS and stimulates its cysteine desulfurase activity. Accepts an activated sulfur from IscS, which is then transferred to TusD, and thus determines the direction of sulfur flow from IscS to 2-thiouridine formation. Also appears to be involved in sulfur transfer for the biosynthesis of molybdopterin.</text>
</comment>
<comment type="pathway">
    <text evidence="1">tRNA modification.</text>
</comment>
<comment type="subunit">
    <text evidence="1">Interacts with IscS.</text>
</comment>
<comment type="subcellular location">
    <subcellularLocation>
        <location evidence="1">Cytoplasm</location>
    </subcellularLocation>
</comment>
<comment type="similarity">
    <text evidence="1">Belongs to the sulfur carrier protein TusA family.</text>
</comment>
<gene>
    <name evidence="1" type="primary">tusA</name>
    <name type="ordered locus">ECP_3565</name>
</gene>
<accession>Q0TBY8</accession>
<sequence length="81" mass="9095">MTDLFSSPDHTLDALGLRCPEPVMMVRKTVRNMQPGETLLIIADDPATTRDIPGFCTFMEHELVAKETDGLPYRYLIRKGG</sequence>
<protein>
    <recommendedName>
        <fullName evidence="1">Sulfur carrier protein TusA</fullName>
    </recommendedName>
    <alternativeName>
        <fullName evidence="1">Sulfur mediator TusA</fullName>
    </alternativeName>
    <alternativeName>
        <fullName evidence="1">Sulfur transfer protein TusA</fullName>
    </alternativeName>
    <alternativeName>
        <fullName evidence="1">tRNA 2-thiouridine synthesizing protein A</fullName>
    </alternativeName>
</protein>